<reference key="1">
    <citation type="journal article" date="1998" name="Microb. Pathog.">
        <title>Identification of iron-regulated proteins of Mycobacterium tuberculosis and cloning of tandem genes encoding a low iron-induced protein and a metal transporting ATPase with similarities to two-component metal transport systems.</title>
        <authorList>
            <person name="Calder K.M."/>
            <person name="Horwitz M.A."/>
        </authorList>
    </citation>
    <scope>NUCLEOTIDE SEQUENCE [GENOMIC DNA]</scope>
    <scope>INDUCTION</scope>
    <source>
        <strain>ATCC 35801 / TMC 107 / Erdman</strain>
    </source>
</reference>
<reference key="2">
    <citation type="journal article" date="1998" name="Nature">
        <title>Deciphering the biology of Mycobacterium tuberculosis from the complete genome sequence.</title>
        <authorList>
            <person name="Cole S.T."/>
            <person name="Brosch R."/>
            <person name="Parkhill J."/>
            <person name="Garnier T."/>
            <person name="Churcher C.M."/>
            <person name="Harris D.E."/>
            <person name="Gordon S.V."/>
            <person name="Eiglmeier K."/>
            <person name="Gas S."/>
            <person name="Barry C.E. III"/>
            <person name="Tekaia F."/>
            <person name="Badcock K."/>
            <person name="Basham D."/>
            <person name="Brown D."/>
            <person name="Chillingworth T."/>
            <person name="Connor R."/>
            <person name="Davies R.M."/>
            <person name="Devlin K."/>
            <person name="Feltwell T."/>
            <person name="Gentles S."/>
            <person name="Hamlin N."/>
            <person name="Holroyd S."/>
            <person name="Hornsby T."/>
            <person name="Jagels K."/>
            <person name="Krogh A."/>
            <person name="McLean J."/>
            <person name="Moule S."/>
            <person name="Murphy L.D."/>
            <person name="Oliver S."/>
            <person name="Osborne J."/>
            <person name="Quail M.A."/>
            <person name="Rajandream M.A."/>
            <person name="Rogers J."/>
            <person name="Rutter S."/>
            <person name="Seeger K."/>
            <person name="Skelton S."/>
            <person name="Squares S."/>
            <person name="Squares R."/>
            <person name="Sulston J.E."/>
            <person name="Taylor K."/>
            <person name="Whitehead S."/>
            <person name="Barrell B.G."/>
        </authorList>
    </citation>
    <scope>NUCLEOTIDE SEQUENCE [LARGE SCALE GENOMIC DNA]</scope>
    <source>
        <strain>ATCC 25618 / H37Rv</strain>
    </source>
</reference>
<reference key="3">
    <citation type="journal article" date="2011" name="Cell Host Microbe">
        <title>Mycobacterial P1-type ATPases mediate resistance to zinc poisoning in human macrophages.</title>
        <authorList>
            <person name="Botella H."/>
            <person name="Peyron P."/>
            <person name="Levillain F."/>
            <person name="Poincloux R."/>
            <person name="Poquet Y."/>
            <person name="Brandli I."/>
            <person name="Wang C."/>
            <person name="Tailleux L."/>
            <person name="Tilleul S."/>
            <person name="Charriere G.M."/>
            <person name="Waddell S.J."/>
            <person name="Foti M."/>
            <person name="Lugo-Villarino G."/>
            <person name="Gao Q."/>
            <person name="Maridonneau-Parini I."/>
            <person name="Butcher P.D."/>
            <person name="Castagnoli P.R."/>
            <person name="Gicquel B."/>
            <person name="de Chastellier C."/>
            <person name="Neyrolles O."/>
        </authorList>
    </citation>
    <scope>FUNCTION</scope>
    <scope>INDUCTION</scope>
    <scope>DISRUPTION PHENOTYPE</scope>
</reference>
<reference key="4">
    <citation type="journal article" date="2011" name="Mol. Cell. Proteomics">
        <title>Proteogenomic analysis of Mycobacterium tuberculosis by high resolution mass spectrometry.</title>
        <authorList>
            <person name="Kelkar D.S."/>
            <person name="Kumar D."/>
            <person name="Kumar P."/>
            <person name="Balakrishnan L."/>
            <person name="Muthusamy B."/>
            <person name="Yadav A.K."/>
            <person name="Shrivastava P."/>
            <person name="Marimuthu A."/>
            <person name="Anand S."/>
            <person name="Sundaram H."/>
            <person name="Kingsbury R."/>
            <person name="Harsha H.C."/>
            <person name="Nair B."/>
            <person name="Prasad T.S."/>
            <person name="Chauhan D.S."/>
            <person name="Katoch K."/>
            <person name="Katoch V.M."/>
            <person name="Kumar P."/>
            <person name="Chaerkady R."/>
            <person name="Ramachandran S."/>
            <person name="Dash D."/>
            <person name="Pandey A."/>
        </authorList>
    </citation>
    <scope>IDENTIFICATION BY MASS SPECTROMETRY [LARGE SCALE ANALYSIS]</scope>
    <source>
        <strain>ATCC 25618 / H37Rv</strain>
    </source>
</reference>
<reference key="5">
    <citation type="journal article" date="2013" name="J. Biol. Chem.">
        <title>A novel P1B-type Mn2+ transporting ATPase is required for secreted protein metallation in Mycobacteria.</title>
        <authorList>
            <person name="Padilla-Benavides T."/>
            <person name="Long J.E."/>
            <person name="Raimunda D."/>
            <person name="Sassetti C.M."/>
            <person name="Arguello J.M."/>
        </authorList>
    </citation>
    <scope>FUNCTION</scope>
    <scope>CATALYTIC ACTIVITY</scope>
    <scope>BIOPHYSICOCHEMICAL PROPERTIES</scope>
    <scope>SUBCELLULAR LOCATION</scope>
    <scope>INDUCTION</scope>
    <scope>DISRUPTION PHENOTYPE</scope>
    <scope>MUTAGENESIS OF HIS-697 AND 700-SER-SER-701</scope>
    <source>
        <strain>H37Rv</strain>
    </source>
</reference>
<evidence type="ECO:0000250" key="1">
    <source>
        <dbReference type="UniProtKB" id="Q5ZWR1"/>
    </source>
</evidence>
<evidence type="ECO:0000255" key="2">
    <source>
        <dbReference type="PROSITE-ProRule" id="PRU00280"/>
    </source>
</evidence>
<evidence type="ECO:0000269" key="3">
    <source>
    </source>
</evidence>
<evidence type="ECO:0000269" key="4">
    <source>
    </source>
</evidence>
<evidence type="ECO:0000269" key="5">
    <source>
    </source>
</evidence>
<evidence type="ECO:0000303" key="6">
    <source>
    </source>
</evidence>
<evidence type="ECO:0000303" key="7">
    <source>
    </source>
</evidence>
<evidence type="ECO:0000305" key="8"/>
<evidence type="ECO:0000305" key="9">
    <source>
    </source>
</evidence>
<evidence type="ECO:0000305" key="10">
    <source>
    </source>
</evidence>
<gene>
    <name evidence="6" type="primary">ctpC</name>
    <name evidence="7" type="synonym">mtaA</name>
    <name type="ordered locus">Rv3270</name>
    <name type="ORF">MTCY71.10</name>
</gene>
<organism>
    <name type="scientific">Mycobacterium tuberculosis (strain ATCC 25618 / H37Rv)</name>
    <dbReference type="NCBI Taxonomy" id="83332"/>
    <lineage>
        <taxon>Bacteria</taxon>
        <taxon>Bacillati</taxon>
        <taxon>Actinomycetota</taxon>
        <taxon>Actinomycetes</taxon>
        <taxon>Mycobacteriales</taxon>
        <taxon>Mycobacteriaceae</taxon>
        <taxon>Mycobacterium</taxon>
        <taxon>Mycobacterium tuberculosis complex</taxon>
    </lineage>
</organism>
<dbReference type="EC" id="7.2.2.22" evidence="4"/>
<dbReference type="EMBL" id="U82820">
    <property type="protein sequence ID" value="AAC15948.1"/>
    <property type="status" value="ALT_FRAME"/>
    <property type="molecule type" value="Genomic_DNA"/>
</dbReference>
<dbReference type="EMBL" id="AL123456">
    <property type="protein sequence ID" value="CCP46089.1"/>
    <property type="molecule type" value="Genomic_DNA"/>
</dbReference>
<dbReference type="PIR" id="G70978">
    <property type="entry name" value="G70978"/>
</dbReference>
<dbReference type="RefSeq" id="NP_217787.1">
    <property type="nucleotide sequence ID" value="NC_000962.3"/>
</dbReference>
<dbReference type="RefSeq" id="WP_003899995.1">
    <property type="nucleotide sequence ID" value="NZ_NVQJ01000003.1"/>
</dbReference>
<dbReference type="SMR" id="P9WPT5"/>
<dbReference type="FunCoup" id="P9WPT5">
    <property type="interactions" value="1"/>
</dbReference>
<dbReference type="STRING" id="83332.Rv3270"/>
<dbReference type="TCDB" id="3.A.3.32.2">
    <property type="family name" value="the p-type atpase (p-atpase) superfamily"/>
</dbReference>
<dbReference type="PaxDb" id="83332-Rv3270"/>
<dbReference type="DNASU" id="888705"/>
<dbReference type="GeneID" id="888705"/>
<dbReference type="KEGG" id="mtu:Rv3270"/>
<dbReference type="KEGG" id="mtv:RVBD_3270"/>
<dbReference type="TubercuList" id="Rv3270"/>
<dbReference type="eggNOG" id="COG2217">
    <property type="taxonomic scope" value="Bacteria"/>
</dbReference>
<dbReference type="InParanoid" id="P9WPT5"/>
<dbReference type="OrthoDB" id="7059309at2"/>
<dbReference type="PhylomeDB" id="P9WPT5"/>
<dbReference type="BRENDA" id="7.2.2.22">
    <property type="organism ID" value="3445"/>
</dbReference>
<dbReference type="Proteomes" id="UP000001584">
    <property type="component" value="Chromosome"/>
</dbReference>
<dbReference type="GO" id="GO:0016020">
    <property type="term" value="C:membrane"/>
    <property type="evidence" value="ECO:0000318"/>
    <property type="project" value="GO_Central"/>
</dbReference>
<dbReference type="GO" id="GO:0005886">
    <property type="term" value="C:plasma membrane"/>
    <property type="evidence" value="ECO:0007005"/>
    <property type="project" value="MTBBASE"/>
</dbReference>
<dbReference type="GO" id="GO:0005524">
    <property type="term" value="F:ATP binding"/>
    <property type="evidence" value="ECO:0007669"/>
    <property type="project" value="UniProtKB-KW"/>
</dbReference>
<dbReference type="GO" id="GO:0016887">
    <property type="term" value="F:ATP hydrolysis activity"/>
    <property type="evidence" value="ECO:0007669"/>
    <property type="project" value="InterPro"/>
</dbReference>
<dbReference type="GO" id="GO:0005507">
    <property type="term" value="F:copper ion binding"/>
    <property type="evidence" value="ECO:0000318"/>
    <property type="project" value="GO_Central"/>
</dbReference>
<dbReference type="GO" id="GO:0043682">
    <property type="term" value="F:P-type divalent copper transporter activity"/>
    <property type="evidence" value="ECO:0000318"/>
    <property type="project" value="GO_Central"/>
</dbReference>
<dbReference type="GO" id="GO:0140613">
    <property type="term" value="F:P-type manganese transporter activity"/>
    <property type="evidence" value="ECO:0007669"/>
    <property type="project" value="RHEA"/>
</dbReference>
<dbReference type="GO" id="GO:0055070">
    <property type="term" value="P:copper ion homeostasis"/>
    <property type="evidence" value="ECO:0000318"/>
    <property type="project" value="GO_Central"/>
</dbReference>
<dbReference type="CDD" id="cd02079">
    <property type="entry name" value="P-type_ATPase_HM"/>
    <property type="match status" value="1"/>
</dbReference>
<dbReference type="FunFam" id="3.40.1110.10:FF:000052">
    <property type="entry name" value="Copper-translocating P-type ATPase"/>
    <property type="match status" value="1"/>
</dbReference>
<dbReference type="Gene3D" id="3.40.1110.10">
    <property type="entry name" value="Calcium-transporting ATPase, cytoplasmic domain N"/>
    <property type="match status" value="1"/>
</dbReference>
<dbReference type="Gene3D" id="2.70.150.10">
    <property type="entry name" value="Calcium-transporting ATPase, cytoplasmic transduction domain A"/>
    <property type="match status" value="1"/>
</dbReference>
<dbReference type="Gene3D" id="3.40.50.1000">
    <property type="entry name" value="HAD superfamily/HAD-like"/>
    <property type="match status" value="1"/>
</dbReference>
<dbReference type="InterPro" id="IPR023299">
    <property type="entry name" value="ATPase_P-typ_cyto_dom_N"/>
</dbReference>
<dbReference type="InterPro" id="IPR018303">
    <property type="entry name" value="ATPase_P-typ_P_site"/>
</dbReference>
<dbReference type="InterPro" id="IPR023298">
    <property type="entry name" value="ATPase_P-typ_TM_dom_sf"/>
</dbReference>
<dbReference type="InterPro" id="IPR008250">
    <property type="entry name" value="ATPase_P-typ_transduc_dom_A_sf"/>
</dbReference>
<dbReference type="InterPro" id="IPR036412">
    <property type="entry name" value="HAD-like_sf"/>
</dbReference>
<dbReference type="InterPro" id="IPR023214">
    <property type="entry name" value="HAD_sf"/>
</dbReference>
<dbReference type="InterPro" id="IPR006121">
    <property type="entry name" value="HMA_dom"/>
</dbReference>
<dbReference type="InterPro" id="IPR027256">
    <property type="entry name" value="P-typ_ATPase_IB"/>
</dbReference>
<dbReference type="InterPro" id="IPR001757">
    <property type="entry name" value="P_typ_ATPase"/>
</dbReference>
<dbReference type="InterPro" id="IPR044492">
    <property type="entry name" value="P_typ_ATPase_HD_dom"/>
</dbReference>
<dbReference type="NCBIfam" id="TIGR01511">
    <property type="entry name" value="ATPase-IB1_Cu"/>
    <property type="match status" value="1"/>
</dbReference>
<dbReference type="NCBIfam" id="TIGR01525">
    <property type="entry name" value="ATPase-IB_hvy"/>
    <property type="match status" value="1"/>
</dbReference>
<dbReference type="NCBIfam" id="TIGR01494">
    <property type="entry name" value="ATPase_P-type"/>
    <property type="match status" value="1"/>
</dbReference>
<dbReference type="PANTHER" id="PTHR43520">
    <property type="entry name" value="ATP7, ISOFORM B"/>
    <property type="match status" value="1"/>
</dbReference>
<dbReference type="PANTHER" id="PTHR43520:SF8">
    <property type="entry name" value="P-TYPE CU(+) TRANSPORTER"/>
    <property type="match status" value="1"/>
</dbReference>
<dbReference type="Pfam" id="PF00122">
    <property type="entry name" value="E1-E2_ATPase"/>
    <property type="match status" value="1"/>
</dbReference>
<dbReference type="Pfam" id="PF00702">
    <property type="entry name" value="Hydrolase"/>
    <property type="match status" value="1"/>
</dbReference>
<dbReference type="PRINTS" id="PR00119">
    <property type="entry name" value="CATATPASE"/>
</dbReference>
<dbReference type="SFLD" id="SFLDG00002">
    <property type="entry name" value="C1.7:_P-type_atpase_like"/>
    <property type="match status" value="1"/>
</dbReference>
<dbReference type="SFLD" id="SFLDF00027">
    <property type="entry name" value="p-type_atpase"/>
    <property type="match status" value="1"/>
</dbReference>
<dbReference type="SUPFAM" id="SSF81653">
    <property type="entry name" value="Calcium ATPase, transduction domain A"/>
    <property type="match status" value="1"/>
</dbReference>
<dbReference type="SUPFAM" id="SSF81665">
    <property type="entry name" value="Calcium ATPase, transmembrane domain M"/>
    <property type="match status" value="1"/>
</dbReference>
<dbReference type="SUPFAM" id="SSF56784">
    <property type="entry name" value="HAD-like"/>
    <property type="match status" value="1"/>
</dbReference>
<dbReference type="PROSITE" id="PS00154">
    <property type="entry name" value="ATPASE_E1_E2"/>
    <property type="match status" value="1"/>
</dbReference>
<dbReference type="PROSITE" id="PS50846">
    <property type="entry name" value="HMA_2"/>
    <property type="match status" value="1"/>
</dbReference>
<sequence>MTLEVVSDAAGRMRVKVDWVRCDSRRAVAVEEAVAKQNGVRVVHAYPRTGSVVVWYSPRRADRAAVLAAIKGAAHVAAELIPARAPHSAEIRNTDVLRMVIGGVALALLGVRRYVFARPPLLGTTGRTVATGVTIFTGYPFLRGALRSLRSGKAGTDALVSAATVASLILRENVVALTVLWLLNIGEYLQDLTLRRTRRAISELLRGNQDTAWVRLTDPSAGSDAATEIQVPIDTVQIGDEVVVHEHVAIPVDGEVVDGEAIVNQSAITGENLPVSVVVGTRVHAGSVVVRGRVVVRAHAVGNQTTIGRIISRVEEAQLDRAPIQTVGENFSRRFVPTSFIVSAIALLITGDVRRAMTMLLIACPCAVGLSTPTAISAAIGNGARRGILIKGGSHLEQAGRVDAIVFDKTGTLTVGRPVVTNIVAMHKDWEPEQVLAYAASSEIHSRHPLAEAVIRSTEERRISIPPHEECEVLVGLGMRTWADGRTLLLGSPSLLRAEKVRVSKKASEWVDKLRRQAETPLLLAVDGTLVGLISLRDEVRPEAAQVLTKLRANGIRRIVMLTGDHPEIAQVVADELGIDEWRAEVMPEDKLAAVRELQDDGYVVGMVGDGINDAPALAAADIGIAMGLAGTDVAVETADVALANDDLHRLLDVGDLGERAVDVIRQNYGMSIAVNAAGLLIGAGGALSPVLAAILHNASSVAVVANSSRLIRYRLDR</sequence>
<name>CTPC_MYCTU</name>
<feature type="chain" id="PRO_0000046337" description="Manganese-exporting P-type ATPase">
    <location>
        <begin position="1"/>
        <end position="718"/>
    </location>
</feature>
<feature type="transmembrane region" description="Helical" evidence="9">
    <location>
        <begin position="87"/>
        <end position="105"/>
    </location>
</feature>
<feature type="transmembrane region" description="Helical" evidence="9">
    <location>
        <begin position="128"/>
        <end position="146"/>
    </location>
</feature>
<feature type="transmembrane region" description="Helical" evidence="9">
    <location>
        <begin position="154"/>
        <end position="168"/>
    </location>
</feature>
<feature type="transmembrane region" description="Helical" evidence="9">
    <location>
        <begin position="177"/>
        <end position="191"/>
    </location>
</feature>
<feature type="transmembrane region" description="Helical" evidence="9">
    <location>
        <begin position="327"/>
        <end position="351"/>
    </location>
</feature>
<feature type="transmembrane region" description="Helical" evidence="9">
    <location>
        <begin position="357"/>
        <end position="375"/>
    </location>
</feature>
<feature type="transmembrane region" description="Helical" evidence="9">
    <location>
        <begin position="661"/>
        <end position="680"/>
    </location>
</feature>
<feature type="transmembrane region" description="Helical" evidence="9">
    <location>
        <begin position="690"/>
        <end position="709"/>
    </location>
</feature>
<feature type="domain" description="HMA" evidence="2">
    <location>
        <begin position="11"/>
        <end position="78"/>
    </location>
</feature>
<feature type="active site" description="4-aspartylphosphate intermediate" evidence="1">
    <location>
        <position position="408"/>
    </location>
</feature>
<feature type="binding site" evidence="1">
    <location>
        <position position="408"/>
    </location>
    <ligand>
        <name>Mg(2+)</name>
        <dbReference type="ChEBI" id="CHEBI:18420"/>
    </ligand>
</feature>
<feature type="binding site" evidence="1">
    <location>
        <position position="410"/>
    </location>
    <ligand>
        <name>Mg(2+)</name>
        <dbReference type="ChEBI" id="CHEBI:18420"/>
    </ligand>
</feature>
<feature type="binding site" evidence="1">
    <location>
        <position position="610"/>
    </location>
    <ligand>
        <name>Mg(2+)</name>
        <dbReference type="ChEBI" id="CHEBI:18420"/>
    </ligand>
</feature>
<feature type="mutagenesis site" description="Loss of ATPase activity." evidence="4">
    <original>H</original>
    <variation>A</variation>
    <location>
        <position position="697"/>
    </location>
</feature>
<feature type="mutagenesis site" description="Loss of ATPase activity." evidence="4">
    <original>SS</original>
    <variation>AA</variation>
    <location>
        <begin position="700"/>
        <end position="701"/>
    </location>
</feature>
<accession>P9WPT5</accession>
<accession>L0TF47</accession>
<accession>O66027</accession>
<accession>P0A502</accession>
<accession>P96875</accession>
<protein>
    <recommendedName>
        <fullName evidence="8">Manganese-exporting P-type ATPase</fullName>
        <ecNumber evidence="4">7.2.2.22</ecNumber>
    </recommendedName>
    <alternativeName>
        <fullName evidence="8">Cation-transporting P-type ATPase CtpC</fullName>
    </alternativeName>
    <alternativeName>
        <fullName evidence="10">Metal-transporting ATPase Mta72</fullName>
    </alternativeName>
</protein>
<comment type="function">
    <text evidence="3 4">High affinity, slow turnover Mn(2+) transporting ATPase, which is required for virulence. Controls the Mn(2+) cytoplasmic quota and is involved in the uploading of Mn(2+) into secreted metalloproteins (PubMed:23482562). Required for tolerance to Zn(2+) and oxidative stress (PubMed:23482562). Plays a crucial role in the ability to resist zinc poisoning in human macrophages (PubMed:21925112). Shows a preference for Mn(2+), but Zn(2+), Co(2+) and Cu(2+) can act as alternative substrates although at slower turnover rates (PubMed:23482562).</text>
</comment>
<comment type="catalytic activity">
    <reaction evidence="4">
        <text>Mn(2+)(in) + ATP + H2O = Mn(2+)(out) + ADP + phosphate + H(+)</text>
        <dbReference type="Rhea" id="RHEA:66820"/>
        <dbReference type="ChEBI" id="CHEBI:15377"/>
        <dbReference type="ChEBI" id="CHEBI:15378"/>
        <dbReference type="ChEBI" id="CHEBI:29035"/>
        <dbReference type="ChEBI" id="CHEBI:30616"/>
        <dbReference type="ChEBI" id="CHEBI:43474"/>
        <dbReference type="ChEBI" id="CHEBI:456216"/>
        <dbReference type="EC" id="7.2.2.22"/>
    </reaction>
</comment>
<comment type="biophysicochemical properties">
    <kinetics>
        <Vmax evidence="4">1.1 umol/h/mg enzyme with Mn(2+) as substrate</Vmax>
        <Vmax evidence="4">0.3 umol/h/mg enzyme with Zn(2+) as substrate</Vmax>
    </kinetics>
</comment>
<comment type="subcellular location">
    <subcellularLocation>
        <location evidence="4">Cell membrane</location>
        <topology evidence="9">Multi-pass membrane protein</topology>
    </subcellularLocation>
</comment>
<comment type="induction">
    <text evidence="3 4 5">Induced by zinc and during infection of human macrophages (PubMed:21925112, PubMed:23482562). Transcriptionally regulated by iron (PubMed:9514635).</text>
</comment>
<comment type="disruption phenotype">
    <text evidence="3 4">Deletion of the gene leads to cytoplasmic Mn(2+) accumulation and a decrease in secreted Mn(2+)-bound proteins (PubMed:23482562). Mutant is hypersensitive to zinc and oxidative stress (PubMed:21925112, PubMed:23482562). It exhibits an impaired growth in human macrophages (PubMed:21925112).</text>
</comment>
<comment type="similarity">
    <text evidence="8">Belongs to the cation transport ATPase (P-type) (TC 3.A.3) family. Type IB subfamily.</text>
</comment>
<comment type="sequence caution" evidence="8">
    <conflict type="frameshift">
        <sequence resource="EMBL-CDS" id="AAC15948"/>
    </conflict>
</comment>
<keyword id="KW-0067">ATP-binding</keyword>
<keyword id="KW-1003">Cell membrane</keyword>
<keyword id="KW-0460">Magnesium</keyword>
<keyword id="KW-0464">Manganese</keyword>
<keyword id="KW-0472">Membrane</keyword>
<keyword id="KW-0479">Metal-binding</keyword>
<keyword id="KW-0547">Nucleotide-binding</keyword>
<keyword id="KW-1185">Reference proteome</keyword>
<keyword id="KW-1278">Translocase</keyword>
<keyword id="KW-0812">Transmembrane</keyword>
<keyword id="KW-1133">Transmembrane helix</keyword>
<keyword id="KW-0843">Virulence</keyword>
<proteinExistence type="evidence at protein level"/>